<dbReference type="EC" id="2.7.1.21" evidence="1"/>
<dbReference type="EMBL" id="J04327">
    <property type="protein sequence ID" value="AAA45817.1"/>
    <property type="status" value="ALT_INIT"/>
    <property type="molecule type" value="Genomic_DNA"/>
</dbReference>
<dbReference type="PIR" id="A31291">
    <property type="entry name" value="KIBEKS"/>
</dbReference>
<dbReference type="SMR" id="P17402"/>
<dbReference type="DrugBank" id="DB03000">
    <property type="generic name" value="S-9-(2-hydroxypropyl)adenine"/>
</dbReference>
<dbReference type="GO" id="GO:0005524">
    <property type="term" value="F:ATP binding"/>
    <property type="evidence" value="ECO:0007669"/>
    <property type="project" value="UniProtKB-KW"/>
</dbReference>
<dbReference type="GO" id="GO:0004797">
    <property type="term" value="F:thymidine kinase activity"/>
    <property type="evidence" value="ECO:0007669"/>
    <property type="project" value="UniProtKB-EC"/>
</dbReference>
<dbReference type="GO" id="GO:0071897">
    <property type="term" value="P:DNA biosynthetic process"/>
    <property type="evidence" value="ECO:0007669"/>
    <property type="project" value="UniProtKB-KW"/>
</dbReference>
<dbReference type="GO" id="GO:0006230">
    <property type="term" value="P:TMP biosynthetic process"/>
    <property type="evidence" value="ECO:0007669"/>
    <property type="project" value="InterPro"/>
</dbReference>
<dbReference type="Gene3D" id="3.40.50.300">
    <property type="entry name" value="P-loop containing nucleotide triphosphate hydrolases"/>
    <property type="match status" value="1"/>
</dbReference>
<dbReference type="HAMAP" id="MF_04029">
    <property type="entry name" value="HSV_KITH"/>
    <property type="match status" value="1"/>
</dbReference>
<dbReference type="InterPro" id="IPR001889">
    <property type="entry name" value="Herpes_TK"/>
</dbReference>
<dbReference type="InterPro" id="IPR027417">
    <property type="entry name" value="P-loop_NTPase"/>
</dbReference>
<dbReference type="Pfam" id="PF00693">
    <property type="entry name" value="Herpes_TK"/>
    <property type="match status" value="1"/>
</dbReference>
<dbReference type="SUPFAM" id="SSF52540">
    <property type="entry name" value="P-loop containing nucleoside triphosphate hydrolases"/>
    <property type="match status" value="1"/>
</dbReference>
<proteinExistence type="evidence at protein level"/>
<feature type="chain" id="PRO_0000175072" description="Thymidine kinase">
    <location>
        <begin position="1"/>
        <end position="376"/>
    </location>
</feature>
<feature type="region of interest" description="Disordered" evidence="2">
    <location>
        <begin position="1"/>
        <end position="39"/>
    </location>
</feature>
<feature type="region of interest" description="Disordered" evidence="2">
    <location>
        <begin position="260"/>
        <end position="280"/>
    </location>
</feature>
<feature type="compositionally biased region" description="Basic residues" evidence="2">
    <location>
        <begin position="19"/>
        <end position="32"/>
    </location>
</feature>
<feature type="active site" description="Proton acceptor" evidence="1">
    <location>
        <position position="83"/>
    </location>
</feature>
<feature type="binding site" evidence="1">
    <location>
        <begin position="56"/>
        <end position="63"/>
    </location>
    <ligand>
        <name>ATP</name>
        <dbReference type="ChEBI" id="CHEBI:30616"/>
    </ligand>
</feature>
<feature type="binding site" evidence="1">
    <location>
        <position position="101"/>
    </location>
    <ligand>
        <name>substrate</name>
    </ligand>
</feature>
<feature type="binding site" evidence="1">
    <location>
        <position position="125"/>
    </location>
    <ligand>
        <name>substrate</name>
    </ligand>
</feature>
<feature type="binding site" evidence="1">
    <location>
        <position position="216"/>
    </location>
    <ligand>
        <name>ATP</name>
        <dbReference type="ChEBI" id="CHEBI:30616"/>
    </ligand>
</feature>
<feature type="binding site" evidence="1">
    <location>
        <position position="222"/>
    </location>
    <ligand>
        <name>substrate</name>
    </ligand>
</feature>
<feature type="sequence variant" description="In mutant KG111.">
    <original>A</original>
    <variation>T</variation>
    <location>
        <position position="175"/>
    </location>
</feature>
<accession>P17402</accession>
<gene>
    <name evidence="1" type="primary">TK</name>
    <name type="ordered locus">UL23</name>
</gene>
<comment type="function">
    <text evidence="1 3">Catalyzes the transfer of the gamma-phospho group of ATP to thymidine to generate dTMP in the salvage pathway of pyrimidine synthesis. The dTMP serves as a substrate for DNA polymerase during viral DNA replication. Allows the virus to be reactivated and to grow in non-proliferative cells lacking a high concentration of phosphorylated nucleic acid precursors.</text>
</comment>
<comment type="catalytic activity">
    <reaction evidence="1">
        <text>thymidine + ATP = dTMP + ADP + H(+)</text>
        <dbReference type="Rhea" id="RHEA:19129"/>
        <dbReference type="ChEBI" id="CHEBI:15378"/>
        <dbReference type="ChEBI" id="CHEBI:17748"/>
        <dbReference type="ChEBI" id="CHEBI:30616"/>
        <dbReference type="ChEBI" id="CHEBI:63528"/>
        <dbReference type="ChEBI" id="CHEBI:456216"/>
        <dbReference type="EC" id="2.7.1.21"/>
    </reaction>
</comment>
<comment type="subunit">
    <text evidence="1">Homodimer.</text>
</comment>
<comment type="biotechnology">
    <text>Used in molecular biology as a selectable marker to identify transfected eukaryotic cells. Used in cancer suicide gene therapy to selectively kill transformed cells.</text>
</comment>
<comment type="miscellaneous">
    <text>Phosphorylates and thereby activates certain drugs like acyclovir (ACV), valacyclovir, and famciclovir to a toxic form, that leads to successful suppression of the infection, while the uninfected cell does not have this ability because it lacks TK. Mutations in thymidine kinase may induce HSV resistance to antiviral therapies in immunocompromised patients. The most frequently observed resistant strains are unable to express TK and are avirulent in animal models of disease. Resistance may be acquired less frequently by selecting variants which no longer recognize ACV or ACV triphosphate as substrates but which retain normal functions.</text>
</comment>
<comment type="similarity">
    <text evidence="1">Belongs to the herpesviridae thymidine kinase family.</text>
</comment>
<comment type="sequence caution" evidence="4">
    <conflict type="erroneous initiation">
        <sequence resource="EMBL-CDS" id="AAA45817"/>
    </conflict>
</comment>
<organism>
    <name type="scientific">Human herpesvirus 1 (strain KOS)</name>
    <name type="common">HHV-1</name>
    <name type="synonym">Human herpes simplex virus 1</name>
    <dbReference type="NCBI Taxonomy" id="10306"/>
    <lineage>
        <taxon>Viruses</taxon>
        <taxon>Duplodnaviria</taxon>
        <taxon>Heunggongvirae</taxon>
        <taxon>Peploviricota</taxon>
        <taxon>Herviviricetes</taxon>
        <taxon>Herpesvirales</taxon>
        <taxon>Orthoherpesviridae</taxon>
        <taxon>Alphaherpesvirinae</taxon>
        <taxon>Simplexvirus</taxon>
        <taxon>Simplexvirus humanalpha1</taxon>
        <taxon>Human herpesvirus 1</taxon>
    </lineage>
</organism>
<reference key="1">
    <citation type="journal article" date="1989" name="Virology">
        <title>Effect of an amber mutation in the herpes simplex virus thymidine kinase gene on polypeptide synthesis and stability.</title>
        <authorList>
            <person name="Irmiere A.F."/>
            <person name="Manos M.M."/>
            <person name="Jacobson J.G."/>
            <person name="Gibbs J.S."/>
            <person name="Coen D.M."/>
        </authorList>
    </citation>
    <scope>NUCLEOTIDE SEQUENCE [GENOMIC DNA]</scope>
</reference>
<reference key="2">
    <citation type="journal article" date="1989" name="Proc. Natl. Acad. Sci. U.S.A.">
        <title>Thymidine kinase-negative herpes simplex virus mutants establish latency in mouse trigeminal ganglia but do not reactivate.</title>
        <authorList>
            <person name="Coen D.M."/>
            <person name="Kosz-Vnenchak M."/>
            <person name="Jacobson J.G."/>
            <person name="Leib D.A."/>
            <person name="Bogard C.L."/>
            <person name="Schaffer P.A."/>
            <person name="Tyler K.L."/>
            <person name="Knipe D.M."/>
        </authorList>
    </citation>
    <scope>FUNCTION</scope>
</reference>
<keyword id="KW-0067">ATP-binding</keyword>
<keyword id="KW-0237">DNA synthesis</keyword>
<keyword id="KW-0244">Early protein</keyword>
<keyword id="KW-0418">Kinase</keyword>
<keyword id="KW-0547">Nucleotide-binding</keyword>
<keyword id="KW-0808">Transferase</keyword>
<evidence type="ECO:0000255" key="1">
    <source>
        <dbReference type="HAMAP-Rule" id="MF_04029"/>
    </source>
</evidence>
<evidence type="ECO:0000256" key="2">
    <source>
        <dbReference type="SAM" id="MobiDB-lite"/>
    </source>
</evidence>
<evidence type="ECO:0000269" key="3">
    <source>
    </source>
</evidence>
<evidence type="ECO:0000305" key="4"/>
<sequence>MASYPCHQHASAFDQAARSRGHSNRRTALRPRRQQEATEVRLEQKMPTLLRVYIDGPHGMGKTTTTQLLVALGSRDDIVYVPEPMTYWQVLGASETIANIYTTQHRLDQGEISAGDAAVVMTSAQITMGMPYAVTDAVLAPHIGGEAGSSHAPPPALTLIFDRHPIAALLCYPAARYLMGSMTPQAVLAFVALIPPTLPGTNIVLGALPEDRHIDRLAKRQRPGERLDLAMLAAIRRVYGLLANTVRYLQGGGSWREDWGQLSGTAVPPQGAEPQSNAGPRPHIGDTLFTLFRAPELLAPNGDLYNVFAWALDVLAKRLRPMHVFILDYDQSPAGCRDALLQLTSGMVQTHVTTPGSIPTICDLARMFAREMGEAN</sequence>
<name>KITH_HHV1K</name>
<protein>
    <recommendedName>
        <fullName evidence="1">Thymidine kinase</fullName>
        <ecNumber evidence="1">2.7.1.21</ecNumber>
    </recommendedName>
</protein>
<organismHost>
    <name type="scientific">Homo sapiens</name>
    <name type="common">Human</name>
    <dbReference type="NCBI Taxonomy" id="9606"/>
</organismHost>